<name>PYRB_METMP</name>
<organism>
    <name type="scientific">Methanococcus maripaludis (strain DSM 14266 / JCM 13030 / NBRC 101832 / S2 / LL)</name>
    <dbReference type="NCBI Taxonomy" id="267377"/>
    <lineage>
        <taxon>Archaea</taxon>
        <taxon>Methanobacteriati</taxon>
        <taxon>Methanobacteriota</taxon>
        <taxon>Methanomada group</taxon>
        <taxon>Methanococci</taxon>
        <taxon>Methanococcales</taxon>
        <taxon>Methanococcaceae</taxon>
        <taxon>Methanococcus</taxon>
    </lineage>
</organism>
<gene>
    <name evidence="1" type="primary">pyrB</name>
    <name type="ordered locus">MMP1659</name>
</gene>
<keyword id="KW-0665">Pyrimidine biosynthesis</keyword>
<keyword id="KW-1185">Reference proteome</keyword>
<keyword id="KW-0808">Transferase</keyword>
<dbReference type="EC" id="2.1.3.2" evidence="1"/>
<dbReference type="EMBL" id="BX950229">
    <property type="protein sequence ID" value="CAF31215.1"/>
    <property type="molecule type" value="Genomic_DNA"/>
</dbReference>
<dbReference type="RefSeq" id="WP_011171603.1">
    <property type="nucleotide sequence ID" value="NC_005791.1"/>
</dbReference>
<dbReference type="SMR" id="Q6LWQ0"/>
<dbReference type="STRING" id="267377.MMP1659"/>
<dbReference type="EnsemblBacteria" id="CAF31215">
    <property type="protein sequence ID" value="CAF31215"/>
    <property type="gene ID" value="MMP1659"/>
</dbReference>
<dbReference type="GeneID" id="41280305"/>
<dbReference type="KEGG" id="mmp:MMP1659"/>
<dbReference type="PATRIC" id="fig|267377.15.peg.1698"/>
<dbReference type="eggNOG" id="arCOG00911">
    <property type="taxonomic scope" value="Archaea"/>
</dbReference>
<dbReference type="HOGENOM" id="CLU_043846_1_2_2"/>
<dbReference type="OrthoDB" id="7792at2157"/>
<dbReference type="UniPathway" id="UPA00070">
    <property type="reaction ID" value="UER00116"/>
</dbReference>
<dbReference type="Proteomes" id="UP000000590">
    <property type="component" value="Chromosome"/>
</dbReference>
<dbReference type="GO" id="GO:0016597">
    <property type="term" value="F:amino acid binding"/>
    <property type="evidence" value="ECO:0007669"/>
    <property type="project" value="InterPro"/>
</dbReference>
<dbReference type="GO" id="GO:0004070">
    <property type="term" value="F:aspartate carbamoyltransferase activity"/>
    <property type="evidence" value="ECO:0007669"/>
    <property type="project" value="UniProtKB-UniRule"/>
</dbReference>
<dbReference type="GO" id="GO:0006207">
    <property type="term" value="P:'de novo' pyrimidine nucleobase biosynthetic process"/>
    <property type="evidence" value="ECO:0007669"/>
    <property type="project" value="InterPro"/>
</dbReference>
<dbReference type="GO" id="GO:0044205">
    <property type="term" value="P:'de novo' UMP biosynthetic process"/>
    <property type="evidence" value="ECO:0007669"/>
    <property type="project" value="UniProtKB-UniRule"/>
</dbReference>
<dbReference type="GO" id="GO:0006520">
    <property type="term" value="P:amino acid metabolic process"/>
    <property type="evidence" value="ECO:0007669"/>
    <property type="project" value="InterPro"/>
</dbReference>
<dbReference type="FunFam" id="3.40.50.1370:FF:000001">
    <property type="entry name" value="Aspartate carbamoyltransferase"/>
    <property type="match status" value="1"/>
</dbReference>
<dbReference type="FunFam" id="3.40.50.1370:FF:000002">
    <property type="entry name" value="Aspartate carbamoyltransferase 2"/>
    <property type="match status" value="1"/>
</dbReference>
<dbReference type="Gene3D" id="3.40.50.1370">
    <property type="entry name" value="Aspartate/ornithine carbamoyltransferase"/>
    <property type="match status" value="2"/>
</dbReference>
<dbReference type="HAMAP" id="MF_00001">
    <property type="entry name" value="Asp_carb_tr"/>
    <property type="match status" value="1"/>
</dbReference>
<dbReference type="InterPro" id="IPR006132">
    <property type="entry name" value="Asp/Orn_carbamoyltranf_P-bd"/>
</dbReference>
<dbReference type="InterPro" id="IPR006130">
    <property type="entry name" value="Asp/Orn_carbamoylTrfase"/>
</dbReference>
<dbReference type="InterPro" id="IPR036901">
    <property type="entry name" value="Asp/Orn_carbamoylTrfase_sf"/>
</dbReference>
<dbReference type="InterPro" id="IPR002082">
    <property type="entry name" value="Asp_carbamoyltransf"/>
</dbReference>
<dbReference type="InterPro" id="IPR006131">
    <property type="entry name" value="Asp_carbamoyltransf_Asp/Orn-bd"/>
</dbReference>
<dbReference type="NCBIfam" id="TIGR00670">
    <property type="entry name" value="asp_carb_tr"/>
    <property type="match status" value="1"/>
</dbReference>
<dbReference type="NCBIfam" id="NF002032">
    <property type="entry name" value="PRK00856.1"/>
    <property type="match status" value="1"/>
</dbReference>
<dbReference type="PANTHER" id="PTHR45753:SF6">
    <property type="entry name" value="ASPARTATE CARBAMOYLTRANSFERASE"/>
    <property type="match status" value="1"/>
</dbReference>
<dbReference type="PANTHER" id="PTHR45753">
    <property type="entry name" value="ORNITHINE CARBAMOYLTRANSFERASE, MITOCHONDRIAL"/>
    <property type="match status" value="1"/>
</dbReference>
<dbReference type="Pfam" id="PF00185">
    <property type="entry name" value="OTCace"/>
    <property type="match status" value="1"/>
</dbReference>
<dbReference type="Pfam" id="PF02729">
    <property type="entry name" value="OTCace_N"/>
    <property type="match status" value="1"/>
</dbReference>
<dbReference type="PRINTS" id="PR00100">
    <property type="entry name" value="AOTCASE"/>
</dbReference>
<dbReference type="PRINTS" id="PR00101">
    <property type="entry name" value="ATCASE"/>
</dbReference>
<dbReference type="SUPFAM" id="SSF53671">
    <property type="entry name" value="Aspartate/ornithine carbamoyltransferase"/>
    <property type="match status" value="1"/>
</dbReference>
<dbReference type="PROSITE" id="PS00097">
    <property type="entry name" value="CARBAMOYLTRANSFERASE"/>
    <property type="match status" value="1"/>
</dbReference>
<evidence type="ECO:0000255" key="1">
    <source>
        <dbReference type="HAMAP-Rule" id="MF_00001"/>
    </source>
</evidence>
<feature type="chain" id="PRO_0000113250" description="Aspartate carbamoyltransferase catalytic subunit">
    <location>
        <begin position="1"/>
        <end position="302"/>
    </location>
</feature>
<feature type="binding site" evidence="1">
    <location>
        <position position="53"/>
    </location>
    <ligand>
        <name>carbamoyl phosphate</name>
        <dbReference type="ChEBI" id="CHEBI:58228"/>
    </ligand>
</feature>
<feature type="binding site" evidence="1">
    <location>
        <position position="54"/>
    </location>
    <ligand>
        <name>carbamoyl phosphate</name>
        <dbReference type="ChEBI" id="CHEBI:58228"/>
    </ligand>
</feature>
<feature type="binding site" evidence="1">
    <location>
        <position position="82"/>
    </location>
    <ligand>
        <name>L-aspartate</name>
        <dbReference type="ChEBI" id="CHEBI:29991"/>
    </ligand>
</feature>
<feature type="binding site" evidence="1">
    <location>
        <position position="103"/>
    </location>
    <ligand>
        <name>carbamoyl phosphate</name>
        <dbReference type="ChEBI" id="CHEBI:58228"/>
    </ligand>
</feature>
<feature type="binding site" evidence="1">
    <location>
        <position position="131"/>
    </location>
    <ligand>
        <name>carbamoyl phosphate</name>
        <dbReference type="ChEBI" id="CHEBI:58228"/>
    </ligand>
</feature>
<feature type="binding site" evidence="1">
    <location>
        <position position="134"/>
    </location>
    <ligand>
        <name>carbamoyl phosphate</name>
        <dbReference type="ChEBI" id="CHEBI:58228"/>
    </ligand>
</feature>
<feature type="binding site" evidence="1">
    <location>
        <position position="164"/>
    </location>
    <ligand>
        <name>L-aspartate</name>
        <dbReference type="ChEBI" id="CHEBI:29991"/>
    </ligand>
</feature>
<feature type="binding site" evidence="1">
    <location>
        <position position="223"/>
    </location>
    <ligand>
        <name>L-aspartate</name>
        <dbReference type="ChEBI" id="CHEBI:29991"/>
    </ligand>
</feature>
<feature type="binding site" evidence="1">
    <location>
        <position position="260"/>
    </location>
    <ligand>
        <name>carbamoyl phosphate</name>
        <dbReference type="ChEBI" id="CHEBI:58228"/>
    </ligand>
</feature>
<feature type="binding site" evidence="1">
    <location>
        <position position="261"/>
    </location>
    <ligand>
        <name>carbamoyl phosphate</name>
        <dbReference type="ChEBI" id="CHEBI:58228"/>
    </ligand>
</feature>
<proteinExistence type="inferred from homology"/>
<comment type="function">
    <text evidence="1">Catalyzes the condensation of carbamoyl phosphate and aspartate to form carbamoyl aspartate and inorganic phosphate, the committed step in the de novo pyrimidine nucleotide biosynthesis pathway.</text>
</comment>
<comment type="catalytic activity">
    <reaction evidence="1">
        <text>carbamoyl phosphate + L-aspartate = N-carbamoyl-L-aspartate + phosphate + H(+)</text>
        <dbReference type="Rhea" id="RHEA:20013"/>
        <dbReference type="ChEBI" id="CHEBI:15378"/>
        <dbReference type="ChEBI" id="CHEBI:29991"/>
        <dbReference type="ChEBI" id="CHEBI:32814"/>
        <dbReference type="ChEBI" id="CHEBI:43474"/>
        <dbReference type="ChEBI" id="CHEBI:58228"/>
        <dbReference type="EC" id="2.1.3.2"/>
    </reaction>
</comment>
<comment type="pathway">
    <text evidence="1">Pyrimidine metabolism; UMP biosynthesis via de novo pathway; (S)-dihydroorotate from bicarbonate: step 2/3.</text>
</comment>
<comment type="subunit">
    <text evidence="1">Heterooligomer of catalytic and regulatory chains.</text>
</comment>
<comment type="similarity">
    <text evidence="1">Belongs to the aspartate/ornithine carbamoyltransferase superfamily. ATCase family.</text>
</comment>
<sequence>MRHLISMRDIGREEILNILDESERMEAILNEKGHCDFLNGRILATLFYEPSTRTRLSFETAMKRLGGNVIGFTDISNTSVTKGESLADTIKVISGYSDLIAIRHPSEGAARLSSENSKVPVINAGDGSNQHPTQTLLDLYTIKREVGHIENLKIAFIGDLKYGRTVHSLCQALSLFKGVEIKLISPDELKMPREVIEDIAGKIKLSEMADVDIDDVDVVYMTRIQKERFVDVNEYYKVKGIYRLSKEHIGEKNVVIMHPLPRVDEIDSEVDNIPQARYFKQSFYGVPVRMAILKLLFEDSVK</sequence>
<protein>
    <recommendedName>
        <fullName evidence="1">Aspartate carbamoyltransferase catalytic subunit</fullName>
        <ecNumber evidence="1">2.1.3.2</ecNumber>
    </recommendedName>
    <alternativeName>
        <fullName evidence="1">Aspartate transcarbamylase</fullName>
        <shortName evidence="1">ATCase</shortName>
    </alternativeName>
</protein>
<accession>Q6LWQ0</accession>
<reference key="1">
    <citation type="journal article" date="2004" name="J. Bacteriol.">
        <title>Complete genome sequence of the genetically tractable hydrogenotrophic methanogen Methanococcus maripaludis.</title>
        <authorList>
            <person name="Hendrickson E.L."/>
            <person name="Kaul R."/>
            <person name="Zhou Y."/>
            <person name="Bovee D."/>
            <person name="Chapman P."/>
            <person name="Chung J."/>
            <person name="Conway de Macario E."/>
            <person name="Dodsworth J.A."/>
            <person name="Gillett W."/>
            <person name="Graham D.E."/>
            <person name="Hackett M."/>
            <person name="Haydock A.K."/>
            <person name="Kang A."/>
            <person name="Land M.L."/>
            <person name="Levy R."/>
            <person name="Lie T.J."/>
            <person name="Major T.A."/>
            <person name="Moore B.C."/>
            <person name="Porat I."/>
            <person name="Palmeiri A."/>
            <person name="Rouse G."/>
            <person name="Saenphimmachak C."/>
            <person name="Soell D."/>
            <person name="Van Dien S."/>
            <person name="Wang T."/>
            <person name="Whitman W.B."/>
            <person name="Xia Q."/>
            <person name="Zhang Y."/>
            <person name="Larimer F.W."/>
            <person name="Olson M.V."/>
            <person name="Leigh J.A."/>
        </authorList>
    </citation>
    <scope>NUCLEOTIDE SEQUENCE [LARGE SCALE GENOMIC DNA]</scope>
    <source>
        <strain>DSM 14266 / JCM 13030 / NBRC 101832 / S2 / LL</strain>
    </source>
</reference>